<comment type="function">
    <text evidence="1">Joins adenosylcobinamide-GDP and alpha-ribazole to generate adenosylcobalamin (Ado-cobalamin). Also synthesizes adenosylcobalamin 5'-phosphate from adenosylcobinamide-GDP and alpha-ribazole 5'-phosphate.</text>
</comment>
<comment type="catalytic activity">
    <reaction evidence="1">
        <text>alpha-ribazole + adenosylcob(III)inamide-GDP = adenosylcob(III)alamin + GMP + H(+)</text>
        <dbReference type="Rhea" id="RHEA:16049"/>
        <dbReference type="ChEBI" id="CHEBI:10329"/>
        <dbReference type="ChEBI" id="CHEBI:15378"/>
        <dbReference type="ChEBI" id="CHEBI:18408"/>
        <dbReference type="ChEBI" id="CHEBI:58115"/>
        <dbReference type="ChEBI" id="CHEBI:60487"/>
        <dbReference type="EC" id="2.7.8.26"/>
    </reaction>
</comment>
<comment type="catalytic activity">
    <reaction evidence="1">
        <text>alpha-ribazole 5'-phosphate + adenosylcob(III)inamide-GDP = adenosylcob(III)alamin 5'-phosphate + GMP + H(+)</text>
        <dbReference type="Rhea" id="RHEA:23560"/>
        <dbReference type="ChEBI" id="CHEBI:15378"/>
        <dbReference type="ChEBI" id="CHEBI:57918"/>
        <dbReference type="ChEBI" id="CHEBI:58115"/>
        <dbReference type="ChEBI" id="CHEBI:60487"/>
        <dbReference type="ChEBI" id="CHEBI:60493"/>
        <dbReference type="EC" id="2.7.8.26"/>
    </reaction>
</comment>
<comment type="cofactor">
    <cofactor evidence="1">
        <name>Mg(2+)</name>
        <dbReference type="ChEBI" id="CHEBI:18420"/>
    </cofactor>
</comment>
<comment type="pathway">
    <text evidence="1">Cofactor biosynthesis; adenosylcobalamin biosynthesis; adenosylcobalamin from cob(II)yrinate a,c-diamide: step 7/7.</text>
</comment>
<comment type="subcellular location">
    <subcellularLocation>
        <location evidence="1">Cell inner membrane</location>
        <topology evidence="1">Multi-pass membrane protein</topology>
    </subcellularLocation>
</comment>
<comment type="similarity">
    <text evidence="1">Belongs to the CobS family.</text>
</comment>
<organism>
    <name type="scientific">Klebsiella pneumoniae (strain 342)</name>
    <dbReference type="NCBI Taxonomy" id="507522"/>
    <lineage>
        <taxon>Bacteria</taxon>
        <taxon>Pseudomonadati</taxon>
        <taxon>Pseudomonadota</taxon>
        <taxon>Gammaproteobacteria</taxon>
        <taxon>Enterobacterales</taxon>
        <taxon>Enterobacteriaceae</taxon>
        <taxon>Klebsiella/Raoultella group</taxon>
        <taxon>Klebsiella</taxon>
        <taxon>Klebsiella pneumoniae complex</taxon>
    </lineage>
</organism>
<sequence length="246" mass="26049">MIKSFFAALSFISRLPVPARLSQGLEIEQYQRSIVTFPLVGLLLGAIAGAVALLLQPWCGVPLAALFGVLALALLTGGFHLDGLADTCDGIFSARTRDRMLEIMRDSRLGTHGGLALIFVLVAKVLVIGELLLRDTHPIAALAAACAVGRGMAVLLMYRHRYAREKGLGNLFIGKVSLQQTLVTMAMGVALATVLLGLQGLRAALITLVLIWGLGWALKRTLGGQTGDTLGAAIELGELLFLLALL</sequence>
<dbReference type="EC" id="2.7.8.26" evidence="1"/>
<dbReference type="EMBL" id="CP000964">
    <property type="protein sequence ID" value="ACI08721.1"/>
    <property type="molecule type" value="Genomic_DNA"/>
</dbReference>
<dbReference type="KEGG" id="kpe:KPK_1723"/>
<dbReference type="HOGENOM" id="CLU_057426_1_1_6"/>
<dbReference type="UniPathway" id="UPA00148">
    <property type="reaction ID" value="UER00238"/>
</dbReference>
<dbReference type="Proteomes" id="UP000001734">
    <property type="component" value="Chromosome"/>
</dbReference>
<dbReference type="GO" id="GO:0005886">
    <property type="term" value="C:plasma membrane"/>
    <property type="evidence" value="ECO:0007669"/>
    <property type="project" value="UniProtKB-SubCell"/>
</dbReference>
<dbReference type="GO" id="GO:0051073">
    <property type="term" value="F:adenosylcobinamide-GDP ribazoletransferase activity"/>
    <property type="evidence" value="ECO:0007669"/>
    <property type="project" value="UniProtKB-UniRule"/>
</dbReference>
<dbReference type="GO" id="GO:0008818">
    <property type="term" value="F:cobalamin 5'-phosphate synthase activity"/>
    <property type="evidence" value="ECO:0007669"/>
    <property type="project" value="UniProtKB-UniRule"/>
</dbReference>
<dbReference type="GO" id="GO:0009236">
    <property type="term" value="P:cobalamin biosynthetic process"/>
    <property type="evidence" value="ECO:0007669"/>
    <property type="project" value="UniProtKB-UniRule"/>
</dbReference>
<dbReference type="HAMAP" id="MF_00719">
    <property type="entry name" value="CobS"/>
    <property type="match status" value="1"/>
</dbReference>
<dbReference type="InterPro" id="IPR003805">
    <property type="entry name" value="CobS"/>
</dbReference>
<dbReference type="NCBIfam" id="TIGR00317">
    <property type="entry name" value="cobS"/>
    <property type="match status" value="1"/>
</dbReference>
<dbReference type="PANTHER" id="PTHR34148">
    <property type="entry name" value="ADENOSYLCOBINAMIDE-GDP RIBAZOLETRANSFERASE"/>
    <property type="match status" value="1"/>
</dbReference>
<dbReference type="PANTHER" id="PTHR34148:SF1">
    <property type="entry name" value="ADENOSYLCOBINAMIDE-GDP RIBAZOLETRANSFERASE"/>
    <property type="match status" value="1"/>
</dbReference>
<dbReference type="Pfam" id="PF02654">
    <property type="entry name" value="CobS"/>
    <property type="match status" value="1"/>
</dbReference>
<protein>
    <recommendedName>
        <fullName evidence="1">Adenosylcobinamide-GDP ribazoletransferase</fullName>
        <ecNumber evidence="1">2.7.8.26</ecNumber>
    </recommendedName>
    <alternativeName>
        <fullName evidence="1">Cobalamin synthase</fullName>
    </alternativeName>
    <alternativeName>
        <fullName evidence="1">Cobalamin-5'-phosphate synthase</fullName>
    </alternativeName>
</protein>
<reference key="1">
    <citation type="journal article" date="2008" name="PLoS Genet.">
        <title>Complete genome sequence of the N2-fixing broad host range endophyte Klebsiella pneumoniae 342 and virulence predictions verified in mice.</title>
        <authorList>
            <person name="Fouts D.E."/>
            <person name="Tyler H.L."/>
            <person name="DeBoy R.T."/>
            <person name="Daugherty S."/>
            <person name="Ren Q."/>
            <person name="Badger J.H."/>
            <person name="Durkin A.S."/>
            <person name="Huot H."/>
            <person name="Shrivastava S."/>
            <person name="Kothari S."/>
            <person name="Dodson R.J."/>
            <person name="Mohamoud Y."/>
            <person name="Khouri H."/>
            <person name="Roesch L.F.W."/>
            <person name="Krogfelt K.A."/>
            <person name="Struve C."/>
            <person name="Triplett E.W."/>
            <person name="Methe B.A."/>
        </authorList>
    </citation>
    <scope>NUCLEOTIDE SEQUENCE [LARGE SCALE GENOMIC DNA]</scope>
    <source>
        <strain>342</strain>
    </source>
</reference>
<evidence type="ECO:0000255" key="1">
    <source>
        <dbReference type="HAMAP-Rule" id="MF_00719"/>
    </source>
</evidence>
<keyword id="KW-0997">Cell inner membrane</keyword>
<keyword id="KW-1003">Cell membrane</keyword>
<keyword id="KW-0169">Cobalamin biosynthesis</keyword>
<keyword id="KW-0460">Magnesium</keyword>
<keyword id="KW-0472">Membrane</keyword>
<keyword id="KW-0808">Transferase</keyword>
<keyword id="KW-0812">Transmembrane</keyword>
<keyword id="KW-1133">Transmembrane helix</keyword>
<proteinExistence type="inferred from homology"/>
<accession>B5XPI1</accession>
<gene>
    <name evidence="1" type="primary">cobS</name>
    <name type="ordered locus">KPK_1723</name>
</gene>
<name>COBS_KLEP3</name>
<feature type="chain" id="PRO_1000132584" description="Adenosylcobinamide-GDP ribazoletransferase">
    <location>
        <begin position="1"/>
        <end position="246"/>
    </location>
</feature>
<feature type="transmembrane region" description="Helical" evidence="1">
    <location>
        <begin position="34"/>
        <end position="54"/>
    </location>
</feature>
<feature type="transmembrane region" description="Helical" evidence="1">
    <location>
        <begin position="59"/>
        <end position="79"/>
    </location>
</feature>
<feature type="transmembrane region" description="Helical" evidence="1">
    <location>
        <begin position="113"/>
        <end position="133"/>
    </location>
</feature>
<feature type="transmembrane region" description="Helical" evidence="1">
    <location>
        <begin position="138"/>
        <end position="158"/>
    </location>
</feature>
<feature type="transmembrane region" description="Helical" evidence="1">
    <location>
        <begin position="171"/>
        <end position="191"/>
    </location>
</feature>
<feature type="transmembrane region" description="Helical" evidence="1">
    <location>
        <begin position="194"/>
        <end position="214"/>
    </location>
</feature>